<dbReference type="EMBL" id="AL009126">
    <property type="protein sequence ID" value="CAB13914.1"/>
    <property type="molecule type" value="Genomic_DNA"/>
</dbReference>
<dbReference type="RefSeq" id="NP_389904.1">
    <property type="nucleotide sequence ID" value="NC_000964.3"/>
</dbReference>
<dbReference type="RefSeq" id="WP_004399541.1">
    <property type="nucleotide sequence ID" value="NZ_OZ025638.1"/>
</dbReference>
<dbReference type="SMR" id="O31891"/>
<dbReference type="FunCoup" id="O31891">
    <property type="interactions" value="93"/>
</dbReference>
<dbReference type="STRING" id="224308.BSU20220"/>
<dbReference type="PaxDb" id="224308-BSU20220"/>
<dbReference type="EnsemblBacteria" id="CAB13914">
    <property type="protein sequence ID" value="CAB13914"/>
    <property type="gene ID" value="BSU_20220"/>
</dbReference>
<dbReference type="GeneID" id="939737"/>
<dbReference type="KEGG" id="bsu:BSU20220"/>
<dbReference type="PATRIC" id="fig|224308.179.peg.2212"/>
<dbReference type="InParanoid" id="O31891"/>
<dbReference type="OrthoDB" id="2894548at2"/>
<dbReference type="BioCyc" id="BSUB:BSU20220-MONOMER"/>
<dbReference type="Proteomes" id="UP000001570">
    <property type="component" value="Chromosome"/>
</dbReference>
<protein>
    <recommendedName>
        <fullName>SPbeta prophage-derived uncharacterized protein YorX</fullName>
    </recommendedName>
</protein>
<name>YORX_BACSU</name>
<proteinExistence type="predicted"/>
<feature type="chain" id="PRO_0000369127" description="SPbeta prophage-derived uncharacterized protein YorX">
    <location>
        <begin position="1"/>
        <end position="75"/>
    </location>
</feature>
<gene>
    <name type="primary">yorX</name>
    <name type="ordered locus">BSU20220</name>
</gene>
<organism>
    <name type="scientific">Bacillus subtilis (strain 168)</name>
    <dbReference type="NCBI Taxonomy" id="224308"/>
    <lineage>
        <taxon>Bacteria</taxon>
        <taxon>Bacillati</taxon>
        <taxon>Bacillota</taxon>
        <taxon>Bacilli</taxon>
        <taxon>Bacillales</taxon>
        <taxon>Bacillaceae</taxon>
        <taxon>Bacillus</taxon>
    </lineage>
</organism>
<keyword id="KW-1185">Reference proteome</keyword>
<sequence length="75" mass="8499">MKKYYVRCKDSKGENASLVIEALSPEHAKEQAYEVYEVGDIYNVSLGEGKSKNCLDRKYSPYIKNDNGKAITIFS</sequence>
<reference key="1">
    <citation type="journal article" date="1997" name="Nature">
        <title>The complete genome sequence of the Gram-positive bacterium Bacillus subtilis.</title>
        <authorList>
            <person name="Kunst F."/>
            <person name="Ogasawara N."/>
            <person name="Moszer I."/>
            <person name="Albertini A.M."/>
            <person name="Alloni G."/>
            <person name="Azevedo V."/>
            <person name="Bertero M.G."/>
            <person name="Bessieres P."/>
            <person name="Bolotin A."/>
            <person name="Borchert S."/>
            <person name="Borriss R."/>
            <person name="Boursier L."/>
            <person name="Brans A."/>
            <person name="Braun M."/>
            <person name="Brignell S.C."/>
            <person name="Bron S."/>
            <person name="Brouillet S."/>
            <person name="Bruschi C.V."/>
            <person name="Caldwell B."/>
            <person name="Capuano V."/>
            <person name="Carter N.M."/>
            <person name="Choi S.-K."/>
            <person name="Codani J.-J."/>
            <person name="Connerton I.F."/>
            <person name="Cummings N.J."/>
            <person name="Daniel R.A."/>
            <person name="Denizot F."/>
            <person name="Devine K.M."/>
            <person name="Duesterhoeft A."/>
            <person name="Ehrlich S.D."/>
            <person name="Emmerson P.T."/>
            <person name="Entian K.-D."/>
            <person name="Errington J."/>
            <person name="Fabret C."/>
            <person name="Ferrari E."/>
            <person name="Foulger D."/>
            <person name="Fritz C."/>
            <person name="Fujita M."/>
            <person name="Fujita Y."/>
            <person name="Fuma S."/>
            <person name="Galizzi A."/>
            <person name="Galleron N."/>
            <person name="Ghim S.-Y."/>
            <person name="Glaser P."/>
            <person name="Goffeau A."/>
            <person name="Golightly E.J."/>
            <person name="Grandi G."/>
            <person name="Guiseppi G."/>
            <person name="Guy B.J."/>
            <person name="Haga K."/>
            <person name="Haiech J."/>
            <person name="Harwood C.R."/>
            <person name="Henaut A."/>
            <person name="Hilbert H."/>
            <person name="Holsappel S."/>
            <person name="Hosono S."/>
            <person name="Hullo M.-F."/>
            <person name="Itaya M."/>
            <person name="Jones L.-M."/>
            <person name="Joris B."/>
            <person name="Karamata D."/>
            <person name="Kasahara Y."/>
            <person name="Klaerr-Blanchard M."/>
            <person name="Klein C."/>
            <person name="Kobayashi Y."/>
            <person name="Koetter P."/>
            <person name="Koningstein G."/>
            <person name="Krogh S."/>
            <person name="Kumano M."/>
            <person name="Kurita K."/>
            <person name="Lapidus A."/>
            <person name="Lardinois S."/>
            <person name="Lauber J."/>
            <person name="Lazarevic V."/>
            <person name="Lee S.-M."/>
            <person name="Levine A."/>
            <person name="Liu H."/>
            <person name="Masuda S."/>
            <person name="Mauel C."/>
            <person name="Medigue C."/>
            <person name="Medina N."/>
            <person name="Mellado R.P."/>
            <person name="Mizuno M."/>
            <person name="Moestl D."/>
            <person name="Nakai S."/>
            <person name="Noback M."/>
            <person name="Noone D."/>
            <person name="O'Reilly M."/>
            <person name="Ogawa K."/>
            <person name="Ogiwara A."/>
            <person name="Oudega B."/>
            <person name="Park S.-H."/>
            <person name="Parro V."/>
            <person name="Pohl T.M."/>
            <person name="Portetelle D."/>
            <person name="Porwollik S."/>
            <person name="Prescott A.M."/>
            <person name="Presecan E."/>
            <person name="Pujic P."/>
            <person name="Purnelle B."/>
            <person name="Rapoport G."/>
            <person name="Rey M."/>
            <person name="Reynolds S."/>
            <person name="Rieger M."/>
            <person name="Rivolta C."/>
            <person name="Rocha E."/>
            <person name="Roche B."/>
            <person name="Rose M."/>
            <person name="Sadaie Y."/>
            <person name="Sato T."/>
            <person name="Scanlan E."/>
            <person name="Schleich S."/>
            <person name="Schroeter R."/>
            <person name="Scoffone F."/>
            <person name="Sekiguchi J."/>
            <person name="Sekowska A."/>
            <person name="Seror S.J."/>
            <person name="Serror P."/>
            <person name="Shin B.-S."/>
            <person name="Soldo B."/>
            <person name="Sorokin A."/>
            <person name="Tacconi E."/>
            <person name="Takagi T."/>
            <person name="Takahashi H."/>
            <person name="Takemaru K."/>
            <person name="Takeuchi M."/>
            <person name="Tamakoshi A."/>
            <person name="Tanaka T."/>
            <person name="Terpstra P."/>
            <person name="Tognoni A."/>
            <person name="Tosato V."/>
            <person name="Uchiyama S."/>
            <person name="Vandenbol M."/>
            <person name="Vannier F."/>
            <person name="Vassarotti A."/>
            <person name="Viari A."/>
            <person name="Wambutt R."/>
            <person name="Wedler E."/>
            <person name="Wedler H."/>
            <person name="Weitzenegger T."/>
            <person name="Winters P."/>
            <person name="Wipat A."/>
            <person name="Yamamoto H."/>
            <person name="Yamane K."/>
            <person name="Yasumoto K."/>
            <person name="Yata K."/>
            <person name="Yoshida K."/>
            <person name="Yoshikawa H.-F."/>
            <person name="Zumstein E."/>
            <person name="Yoshikawa H."/>
            <person name="Danchin A."/>
        </authorList>
    </citation>
    <scope>NUCLEOTIDE SEQUENCE [LARGE SCALE GENOMIC DNA]</scope>
    <source>
        <strain>168</strain>
    </source>
</reference>
<accession>O31891</accession>